<reference key="1">
    <citation type="journal article" date="2008" name="PLoS Genet.">
        <title>Complete genome sequence of the N2-fixing broad host range endophyte Klebsiella pneumoniae 342 and virulence predictions verified in mice.</title>
        <authorList>
            <person name="Fouts D.E."/>
            <person name="Tyler H.L."/>
            <person name="DeBoy R.T."/>
            <person name="Daugherty S."/>
            <person name="Ren Q."/>
            <person name="Badger J.H."/>
            <person name="Durkin A.S."/>
            <person name="Huot H."/>
            <person name="Shrivastava S."/>
            <person name="Kothari S."/>
            <person name="Dodson R.J."/>
            <person name="Mohamoud Y."/>
            <person name="Khouri H."/>
            <person name="Roesch L.F.W."/>
            <person name="Krogfelt K.A."/>
            <person name="Struve C."/>
            <person name="Triplett E.W."/>
            <person name="Methe B.A."/>
        </authorList>
    </citation>
    <scope>NUCLEOTIDE SEQUENCE [LARGE SCALE GENOMIC DNA]</scope>
    <source>
        <strain>342</strain>
    </source>
</reference>
<name>RL31_KLEP3</name>
<organism>
    <name type="scientific">Klebsiella pneumoniae (strain 342)</name>
    <dbReference type="NCBI Taxonomy" id="507522"/>
    <lineage>
        <taxon>Bacteria</taxon>
        <taxon>Pseudomonadati</taxon>
        <taxon>Pseudomonadota</taxon>
        <taxon>Gammaproteobacteria</taxon>
        <taxon>Enterobacterales</taxon>
        <taxon>Enterobacteriaceae</taxon>
        <taxon>Klebsiella/Raoultella group</taxon>
        <taxon>Klebsiella</taxon>
        <taxon>Klebsiella pneumoniae complex</taxon>
    </lineage>
</organism>
<accession>B5XZ32</accession>
<dbReference type="EMBL" id="CP000964">
    <property type="protein sequence ID" value="ACI09500.1"/>
    <property type="molecule type" value="Genomic_DNA"/>
</dbReference>
<dbReference type="SMR" id="B5XZ32"/>
<dbReference type="KEGG" id="kpe:KPK_5448"/>
<dbReference type="HOGENOM" id="CLU_114306_4_3_6"/>
<dbReference type="Proteomes" id="UP000001734">
    <property type="component" value="Chromosome"/>
</dbReference>
<dbReference type="GO" id="GO:1990904">
    <property type="term" value="C:ribonucleoprotein complex"/>
    <property type="evidence" value="ECO:0007669"/>
    <property type="project" value="UniProtKB-KW"/>
</dbReference>
<dbReference type="GO" id="GO:0005840">
    <property type="term" value="C:ribosome"/>
    <property type="evidence" value="ECO:0007669"/>
    <property type="project" value="UniProtKB-KW"/>
</dbReference>
<dbReference type="GO" id="GO:0046872">
    <property type="term" value="F:metal ion binding"/>
    <property type="evidence" value="ECO:0007669"/>
    <property type="project" value="UniProtKB-KW"/>
</dbReference>
<dbReference type="GO" id="GO:0019843">
    <property type="term" value="F:rRNA binding"/>
    <property type="evidence" value="ECO:0007669"/>
    <property type="project" value="UniProtKB-KW"/>
</dbReference>
<dbReference type="GO" id="GO:0003735">
    <property type="term" value="F:structural constituent of ribosome"/>
    <property type="evidence" value="ECO:0007669"/>
    <property type="project" value="InterPro"/>
</dbReference>
<dbReference type="GO" id="GO:0006412">
    <property type="term" value="P:translation"/>
    <property type="evidence" value="ECO:0007669"/>
    <property type="project" value="UniProtKB-UniRule"/>
</dbReference>
<dbReference type="FunFam" id="4.10.830.30:FF:000001">
    <property type="entry name" value="50S ribosomal protein L31"/>
    <property type="match status" value="1"/>
</dbReference>
<dbReference type="Gene3D" id="4.10.830.30">
    <property type="entry name" value="Ribosomal protein L31"/>
    <property type="match status" value="1"/>
</dbReference>
<dbReference type="HAMAP" id="MF_00501">
    <property type="entry name" value="Ribosomal_bL31_1"/>
    <property type="match status" value="1"/>
</dbReference>
<dbReference type="InterPro" id="IPR034704">
    <property type="entry name" value="Ribosomal_bL28/bL31-like_sf"/>
</dbReference>
<dbReference type="InterPro" id="IPR002150">
    <property type="entry name" value="Ribosomal_bL31"/>
</dbReference>
<dbReference type="InterPro" id="IPR027491">
    <property type="entry name" value="Ribosomal_bL31_A"/>
</dbReference>
<dbReference type="InterPro" id="IPR042105">
    <property type="entry name" value="Ribosomal_bL31_sf"/>
</dbReference>
<dbReference type="NCBIfam" id="TIGR00105">
    <property type="entry name" value="L31"/>
    <property type="match status" value="1"/>
</dbReference>
<dbReference type="NCBIfam" id="NF000612">
    <property type="entry name" value="PRK00019.1"/>
    <property type="match status" value="1"/>
</dbReference>
<dbReference type="PANTHER" id="PTHR33280">
    <property type="entry name" value="50S RIBOSOMAL PROTEIN L31, CHLOROPLASTIC"/>
    <property type="match status" value="1"/>
</dbReference>
<dbReference type="PANTHER" id="PTHR33280:SF6">
    <property type="entry name" value="LARGE RIBOSOMAL SUBUNIT PROTEIN BL31A"/>
    <property type="match status" value="1"/>
</dbReference>
<dbReference type="Pfam" id="PF01197">
    <property type="entry name" value="Ribosomal_L31"/>
    <property type="match status" value="1"/>
</dbReference>
<dbReference type="PRINTS" id="PR01249">
    <property type="entry name" value="RIBOSOMALL31"/>
</dbReference>
<dbReference type="SUPFAM" id="SSF143800">
    <property type="entry name" value="L28p-like"/>
    <property type="match status" value="1"/>
</dbReference>
<dbReference type="PROSITE" id="PS01143">
    <property type="entry name" value="RIBOSOMAL_L31"/>
    <property type="match status" value="1"/>
</dbReference>
<keyword id="KW-0479">Metal-binding</keyword>
<keyword id="KW-0687">Ribonucleoprotein</keyword>
<keyword id="KW-0689">Ribosomal protein</keyword>
<keyword id="KW-0694">RNA-binding</keyword>
<keyword id="KW-0699">rRNA-binding</keyword>
<keyword id="KW-0862">Zinc</keyword>
<proteinExistence type="inferred from homology"/>
<feature type="chain" id="PRO_1000126647" description="Large ribosomal subunit protein bL31">
    <location>
        <begin position="1"/>
        <end position="70"/>
    </location>
</feature>
<feature type="binding site" evidence="1">
    <location>
        <position position="16"/>
    </location>
    <ligand>
        <name>Zn(2+)</name>
        <dbReference type="ChEBI" id="CHEBI:29105"/>
    </ligand>
</feature>
<feature type="binding site" evidence="1">
    <location>
        <position position="18"/>
    </location>
    <ligand>
        <name>Zn(2+)</name>
        <dbReference type="ChEBI" id="CHEBI:29105"/>
    </ligand>
</feature>
<feature type="binding site" evidence="1">
    <location>
        <position position="37"/>
    </location>
    <ligand>
        <name>Zn(2+)</name>
        <dbReference type="ChEBI" id="CHEBI:29105"/>
    </ligand>
</feature>
<feature type="binding site" evidence="1">
    <location>
        <position position="40"/>
    </location>
    <ligand>
        <name>Zn(2+)</name>
        <dbReference type="ChEBI" id="CHEBI:29105"/>
    </ligand>
</feature>
<comment type="function">
    <text evidence="1">Binds the 23S rRNA.</text>
</comment>
<comment type="cofactor">
    <cofactor evidence="1">
        <name>Zn(2+)</name>
        <dbReference type="ChEBI" id="CHEBI:29105"/>
    </cofactor>
    <text evidence="1">Binds 1 zinc ion per subunit.</text>
</comment>
<comment type="subunit">
    <text evidence="1">Part of the 50S ribosomal subunit.</text>
</comment>
<comment type="similarity">
    <text evidence="1">Belongs to the bacterial ribosomal protein bL31 family. Type A subfamily.</text>
</comment>
<gene>
    <name evidence="1" type="primary">rpmE</name>
    <name type="ordered locus">KPK_5448</name>
</gene>
<sequence>MKKGIHPKYEEITATCSCGNVMKIRSTVGHDLNLDVCGKCHPFFTGKQRDVATGGRVDRFNKRFSIPGSK</sequence>
<protein>
    <recommendedName>
        <fullName evidence="1">Large ribosomal subunit protein bL31</fullName>
    </recommendedName>
    <alternativeName>
        <fullName evidence="2">50S ribosomal protein L31</fullName>
    </alternativeName>
</protein>
<evidence type="ECO:0000255" key="1">
    <source>
        <dbReference type="HAMAP-Rule" id="MF_00501"/>
    </source>
</evidence>
<evidence type="ECO:0000305" key="2"/>